<evidence type="ECO:0000255" key="1">
    <source>
        <dbReference type="HAMAP-Rule" id="MF_00038"/>
    </source>
</evidence>
<keyword id="KW-0131">Cell cycle</keyword>
<keyword id="KW-0132">Cell division</keyword>
<keyword id="KW-0997">Cell inner membrane</keyword>
<keyword id="KW-1003">Cell membrane</keyword>
<keyword id="KW-0133">Cell shape</keyword>
<keyword id="KW-0961">Cell wall biogenesis/degradation</keyword>
<keyword id="KW-0460">Magnesium</keyword>
<keyword id="KW-0472">Membrane</keyword>
<keyword id="KW-0479">Metal-binding</keyword>
<keyword id="KW-0573">Peptidoglycan synthesis</keyword>
<keyword id="KW-1185">Reference proteome</keyword>
<keyword id="KW-0808">Transferase</keyword>
<keyword id="KW-0812">Transmembrane</keyword>
<keyword id="KW-1133">Transmembrane helix</keyword>
<reference key="1">
    <citation type="journal article" date="2001" name="DNA Res.">
        <title>Complete genomic sequence of the filamentous nitrogen-fixing cyanobacterium Anabaena sp. strain PCC 7120.</title>
        <authorList>
            <person name="Kaneko T."/>
            <person name="Nakamura Y."/>
            <person name="Wolk C.P."/>
            <person name="Kuritz T."/>
            <person name="Sasamoto S."/>
            <person name="Watanabe A."/>
            <person name="Iriguchi M."/>
            <person name="Ishikawa A."/>
            <person name="Kawashima K."/>
            <person name="Kimura T."/>
            <person name="Kishida Y."/>
            <person name="Kohara M."/>
            <person name="Matsumoto M."/>
            <person name="Matsuno A."/>
            <person name="Muraki A."/>
            <person name="Nakazaki N."/>
            <person name="Shimpo S."/>
            <person name="Sugimoto M."/>
            <person name="Takazawa M."/>
            <person name="Yamada M."/>
            <person name="Yasuda M."/>
            <person name="Tabata S."/>
        </authorList>
    </citation>
    <scope>NUCLEOTIDE SEQUENCE [LARGE SCALE GENOMIC DNA]</scope>
    <source>
        <strain>PCC 7120 / SAG 25.82 / UTEX 2576</strain>
    </source>
</reference>
<dbReference type="EC" id="2.7.8.13" evidence="1"/>
<dbReference type="EMBL" id="BA000019">
    <property type="protein sequence ID" value="BAB76015.1"/>
    <property type="molecule type" value="Genomic_DNA"/>
</dbReference>
<dbReference type="PIR" id="AE2345">
    <property type="entry name" value="AE2345"/>
</dbReference>
<dbReference type="RefSeq" id="WP_010998454.1">
    <property type="nucleotide sequence ID" value="NZ_RSCN01000027.1"/>
</dbReference>
<dbReference type="SMR" id="Q8YP83"/>
<dbReference type="STRING" id="103690.gene:10496365"/>
<dbReference type="KEGG" id="ana:all4316"/>
<dbReference type="eggNOG" id="COG0472">
    <property type="taxonomic scope" value="Bacteria"/>
</dbReference>
<dbReference type="OrthoDB" id="9805475at2"/>
<dbReference type="UniPathway" id="UPA00219"/>
<dbReference type="Proteomes" id="UP000002483">
    <property type="component" value="Chromosome"/>
</dbReference>
<dbReference type="GO" id="GO:0005886">
    <property type="term" value="C:plasma membrane"/>
    <property type="evidence" value="ECO:0007669"/>
    <property type="project" value="UniProtKB-SubCell"/>
</dbReference>
<dbReference type="GO" id="GO:0046872">
    <property type="term" value="F:metal ion binding"/>
    <property type="evidence" value="ECO:0007669"/>
    <property type="project" value="UniProtKB-KW"/>
</dbReference>
<dbReference type="GO" id="GO:0008963">
    <property type="term" value="F:phospho-N-acetylmuramoyl-pentapeptide-transferase activity"/>
    <property type="evidence" value="ECO:0007669"/>
    <property type="project" value="UniProtKB-UniRule"/>
</dbReference>
<dbReference type="GO" id="GO:0051992">
    <property type="term" value="F:UDP-N-acetylmuramoyl-L-alanyl-D-glutamyl-meso-2,6-diaminopimelyl-D-alanyl-D-alanine:undecaprenyl-phosphate transferase activity"/>
    <property type="evidence" value="ECO:0007669"/>
    <property type="project" value="RHEA"/>
</dbReference>
<dbReference type="GO" id="GO:0051301">
    <property type="term" value="P:cell division"/>
    <property type="evidence" value="ECO:0007669"/>
    <property type="project" value="UniProtKB-KW"/>
</dbReference>
<dbReference type="GO" id="GO:0071555">
    <property type="term" value="P:cell wall organization"/>
    <property type="evidence" value="ECO:0007669"/>
    <property type="project" value="UniProtKB-KW"/>
</dbReference>
<dbReference type="GO" id="GO:0009252">
    <property type="term" value="P:peptidoglycan biosynthetic process"/>
    <property type="evidence" value="ECO:0007669"/>
    <property type="project" value="UniProtKB-UniRule"/>
</dbReference>
<dbReference type="GO" id="GO:0008360">
    <property type="term" value="P:regulation of cell shape"/>
    <property type="evidence" value="ECO:0007669"/>
    <property type="project" value="UniProtKB-KW"/>
</dbReference>
<dbReference type="CDD" id="cd06852">
    <property type="entry name" value="GT_MraY"/>
    <property type="match status" value="1"/>
</dbReference>
<dbReference type="HAMAP" id="MF_00038">
    <property type="entry name" value="MraY"/>
    <property type="match status" value="1"/>
</dbReference>
<dbReference type="InterPro" id="IPR000715">
    <property type="entry name" value="Glycosyl_transferase_4"/>
</dbReference>
<dbReference type="InterPro" id="IPR003524">
    <property type="entry name" value="PNAcMuramoyl-5peptid_Trfase"/>
</dbReference>
<dbReference type="InterPro" id="IPR018480">
    <property type="entry name" value="PNAcMuramoyl-5peptid_Trfase_CS"/>
</dbReference>
<dbReference type="NCBIfam" id="TIGR00445">
    <property type="entry name" value="mraY"/>
    <property type="match status" value="1"/>
</dbReference>
<dbReference type="PANTHER" id="PTHR22926">
    <property type="entry name" value="PHOSPHO-N-ACETYLMURAMOYL-PENTAPEPTIDE-TRANSFERASE"/>
    <property type="match status" value="1"/>
</dbReference>
<dbReference type="PANTHER" id="PTHR22926:SF5">
    <property type="entry name" value="PHOSPHO-N-ACETYLMURAMOYL-PENTAPEPTIDE-TRANSFERASE HOMOLOG"/>
    <property type="match status" value="1"/>
</dbReference>
<dbReference type="Pfam" id="PF00953">
    <property type="entry name" value="Glycos_transf_4"/>
    <property type="match status" value="1"/>
</dbReference>
<dbReference type="Pfam" id="PF10555">
    <property type="entry name" value="MraY_sig1"/>
    <property type="match status" value="1"/>
</dbReference>
<dbReference type="PROSITE" id="PS01347">
    <property type="entry name" value="MRAY_1"/>
    <property type="match status" value="1"/>
</dbReference>
<dbReference type="PROSITE" id="PS01348">
    <property type="entry name" value="MRAY_2"/>
    <property type="match status" value="1"/>
</dbReference>
<feature type="chain" id="PRO_0000108771" description="Phospho-N-acetylmuramoyl-pentapeptide-transferase">
    <location>
        <begin position="1"/>
        <end position="369"/>
    </location>
</feature>
<feature type="transmembrane region" description="Helical" evidence="1">
    <location>
        <begin position="13"/>
        <end position="33"/>
    </location>
</feature>
<feature type="transmembrane region" description="Helical" evidence="1">
    <location>
        <begin position="49"/>
        <end position="69"/>
    </location>
</feature>
<feature type="transmembrane region" description="Helical" evidence="1">
    <location>
        <begin position="95"/>
        <end position="115"/>
    </location>
</feature>
<feature type="transmembrane region" description="Helical" evidence="1">
    <location>
        <begin position="119"/>
        <end position="139"/>
    </location>
</feature>
<feature type="transmembrane region" description="Helical" evidence="1">
    <location>
        <begin position="154"/>
        <end position="174"/>
    </location>
</feature>
<feature type="transmembrane region" description="Helical" evidence="1">
    <location>
        <begin position="183"/>
        <end position="203"/>
    </location>
</feature>
<feature type="transmembrane region" description="Helical" evidence="1">
    <location>
        <begin position="215"/>
        <end position="235"/>
    </location>
</feature>
<feature type="transmembrane region" description="Helical" evidence="1">
    <location>
        <begin position="237"/>
        <end position="257"/>
    </location>
</feature>
<feature type="transmembrane region" description="Helical" evidence="1">
    <location>
        <begin position="281"/>
        <end position="301"/>
    </location>
</feature>
<feature type="transmembrane region" description="Helical" evidence="1">
    <location>
        <begin position="346"/>
        <end position="366"/>
    </location>
</feature>
<proteinExistence type="inferred from homology"/>
<gene>
    <name evidence="1" type="primary">mraY</name>
    <name type="ordered locus">all4316</name>
</gene>
<protein>
    <recommendedName>
        <fullName evidence="1">Phospho-N-acetylmuramoyl-pentapeptide-transferase</fullName>
        <ecNumber evidence="1">2.7.8.13</ecNumber>
    </recommendedName>
    <alternativeName>
        <fullName evidence="1">UDP-MurNAc-pentapeptide phosphotransferase</fullName>
    </alternativeName>
</protein>
<accession>Q8YP83</accession>
<organism>
    <name type="scientific">Nostoc sp. (strain PCC 7120 / SAG 25.82 / UTEX 2576)</name>
    <dbReference type="NCBI Taxonomy" id="103690"/>
    <lineage>
        <taxon>Bacteria</taxon>
        <taxon>Bacillati</taxon>
        <taxon>Cyanobacteriota</taxon>
        <taxon>Cyanophyceae</taxon>
        <taxon>Nostocales</taxon>
        <taxon>Nostocaceae</taxon>
        <taxon>Nostoc</taxon>
    </lineage>
</organism>
<name>MRAY_NOSS1</name>
<comment type="function">
    <text evidence="1">Catalyzes the initial step of the lipid cycle reactions in the biosynthesis of the cell wall peptidoglycan: transfers peptidoglycan precursor phospho-MurNAc-pentapeptide from UDP-MurNAc-pentapeptide onto the lipid carrier undecaprenyl phosphate, yielding undecaprenyl-pyrophosphoryl-MurNAc-pentapeptide, known as lipid I.</text>
</comment>
<comment type="catalytic activity">
    <reaction evidence="1">
        <text>UDP-N-acetyl-alpha-D-muramoyl-L-alanyl-gamma-D-glutamyl-meso-2,6-diaminopimeloyl-D-alanyl-D-alanine + di-trans,octa-cis-undecaprenyl phosphate = di-trans,octa-cis-undecaprenyl diphospho-N-acetyl-alpha-D-muramoyl-L-alanyl-D-glutamyl-meso-2,6-diaminopimeloyl-D-alanyl-D-alanine + UMP</text>
        <dbReference type="Rhea" id="RHEA:28386"/>
        <dbReference type="ChEBI" id="CHEBI:57865"/>
        <dbReference type="ChEBI" id="CHEBI:60392"/>
        <dbReference type="ChEBI" id="CHEBI:61386"/>
        <dbReference type="ChEBI" id="CHEBI:61387"/>
        <dbReference type="EC" id="2.7.8.13"/>
    </reaction>
</comment>
<comment type="cofactor">
    <cofactor evidence="1">
        <name>Mg(2+)</name>
        <dbReference type="ChEBI" id="CHEBI:18420"/>
    </cofactor>
</comment>
<comment type="pathway">
    <text evidence="1">Cell wall biogenesis; peptidoglycan biosynthesis.</text>
</comment>
<comment type="subcellular location">
    <subcellularLocation>
        <location evidence="1">Cell inner membrane</location>
        <topology evidence="1">Multi-pass membrane protein</topology>
    </subcellularLocation>
</comment>
<comment type="similarity">
    <text evidence="1">Belongs to the glycosyltransferase 4 family. MraY subfamily.</text>
</comment>
<sequence length="369" mass="38335">MDAKLSPNQGLNISGIGLASSLAAGLGIAALTLDWMANRNPWQGTSLTLPLLLCTIASAIAGYFVVPLLQALKTGQIIREDGPQAHLKKAGTPTMGGIFFIPVAVVGACVLSNFATEVLAVSALTLSYGLIGWIDDWQILRRKSNKGISPRMKLALQIGFAAAFCLWLMFNQPANITSIALPWVSFALPLGFLFWPLAGFVLVAESNATNLTDGIDGLAGGTVAIALLALGAIVAPTSPALMVFCAALSGSCLGFLAHNRNPARVFMGDTGSLALGGALAAVALLTNSLVALFILSGIFFVETLSVMAQVSYYKATKGPDGKGKRLLKMAPLHHHLELSGWSELQVVSSFYVIAAILAAICLAIASGGA</sequence>